<protein>
    <recommendedName>
        <fullName>Uncharacterized transporter MT0942</fullName>
    </recommendedName>
</protein>
<comment type="subcellular location">
    <subcellularLocation>
        <location evidence="2">Cell membrane</location>
        <topology evidence="2">Multi-pass membrane protein</topology>
    </subcellularLocation>
</comment>
<comment type="similarity">
    <text evidence="2">Belongs to the BCCT transporter (TC 2.A.15) family.</text>
</comment>
<feature type="chain" id="PRO_0000426905" description="Uncharacterized transporter MT0942">
    <location>
        <begin position="1"/>
        <end position="593"/>
    </location>
</feature>
<feature type="transmembrane region" description="Helical" evidence="1">
    <location>
        <begin position="21"/>
        <end position="41"/>
    </location>
</feature>
<feature type="transmembrane region" description="Helical" evidence="1">
    <location>
        <begin position="60"/>
        <end position="80"/>
    </location>
</feature>
<feature type="transmembrane region" description="Helical" evidence="1">
    <location>
        <begin position="97"/>
        <end position="117"/>
    </location>
</feature>
<feature type="transmembrane region" description="Helical" evidence="1">
    <location>
        <begin position="148"/>
        <end position="168"/>
    </location>
</feature>
<feature type="transmembrane region" description="Helical" evidence="1">
    <location>
        <begin position="204"/>
        <end position="224"/>
    </location>
</feature>
<feature type="transmembrane region" description="Helical" evidence="1">
    <location>
        <begin position="243"/>
        <end position="263"/>
    </location>
</feature>
<feature type="transmembrane region" description="Helical" evidence="1">
    <location>
        <begin position="275"/>
        <end position="295"/>
    </location>
</feature>
<feature type="transmembrane region" description="Helical" evidence="1">
    <location>
        <begin position="328"/>
        <end position="348"/>
    </location>
</feature>
<feature type="transmembrane region" description="Helical" evidence="1">
    <location>
        <begin position="359"/>
        <end position="379"/>
    </location>
</feature>
<feature type="transmembrane region" description="Helical" evidence="1">
    <location>
        <begin position="410"/>
        <end position="430"/>
    </location>
</feature>
<feature type="transmembrane region" description="Helical" evidence="1">
    <location>
        <begin position="457"/>
        <end position="477"/>
    </location>
</feature>
<feature type="transmembrane region" description="Helical" evidence="1">
    <location>
        <begin position="485"/>
        <end position="505"/>
    </location>
</feature>
<gene>
    <name type="ordered locus">MT0942</name>
</gene>
<reference key="1">
    <citation type="journal article" date="2002" name="J. Bacteriol.">
        <title>Whole-genome comparison of Mycobacterium tuberculosis clinical and laboratory strains.</title>
        <authorList>
            <person name="Fleischmann R.D."/>
            <person name="Alland D."/>
            <person name="Eisen J.A."/>
            <person name="Carpenter L."/>
            <person name="White O."/>
            <person name="Peterson J.D."/>
            <person name="DeBoy R.T."/>
            <person name="Dodson R.J."/>
            <person name="Gwinn M.L."/>
            <person name="Haft D.H."/>
            <person name="Hickey E.K."/>
            <person name="Kolonay J.F."/>
            <person name="Nelson W.C."/>
            <person name="Umayam L.A."/>
            <person name="Ermolaeva M.D."/>
            <person name="Salzberg S.L."/>
            <person name="Delcher A."/>
            <person name="Utterback T.R."/>
            <person name="Weidman J.F."/>
            <person name="Khouri H.M."/>
            <person name="Gill J."/>
            <person name="Mikula A."/>
            <person name="Bishai W."/>
            <person name="Jacobs W.R. Jr."/>
            <person name="Venter J.C."/>
            <person name="Fraser C.M."/>
        </authorList>
    </citation>
    <scope>NUCLEOTIDE SEQUENCE [LARGE SCALE GENOMIC DNA]</scope>
    <source>
        <strain>CDC 1551 / Oshkosh</strain>
    </source>
</reference>
<accession>P9WPR6</accession>
<accession>L0T559</accession>
<accession>O05909</accession>
<accession>P63695</accession>
<keyword id="KW-1003">Cell membrane</keyword>
<keyword id="KW-0472">Membrane</keyword>
<keyword id="KW-1185">Reference proteome</keyword>
<keyword id="KW-0812">Transmembrane</keyword>
<keyword id="KW-1133">Transmembrane helix</keyword>
<keyword id="KW-0813">Transport</keyword>
<name>Y917_MYCTO</name>
<organism>
    <name type="scientific">Mycobacterium tuberculosis (strain CDC 1551 / Oshkosh)</name>
    <dbReference type="NCBI Taxonomy" id="83331"/>
    <lineage>
        <taxon>Bacteria</taxon>
        <taxon>Bacillati</taxon>
        <taxon>Actinomycetota</taxon>
        <taxon>Actinomycetes</taxon>
        <taxon>Mycobacteriales</taxon>
        <taxon>Mycobacteriaceae</taxon>
        <taxon>Mycobacterium</taxon>
        <taxon>Mycobacterium tuberculosis complex</taxon>
    </lineage>
</organism>
<proteinExistence type="inferred from homology"/>
<dbReference type="EMBL" id="AE000516">
    <property type="protein sequence ID" value="AAK45189.1"/>
    <property type="molecule type" value="Genomic_DNA"/>
</dbReference>
<dbReference type="PIR" id="E70582">
    <property type="entry name" value="E70582"/>
</dbReference>
<dbReference type="RefSeq" id="WP_003404749.1">
    <property type="nucleotide sequence ID" value="NZ_KK341227.1"/>
</dbReference>
<dbReference type="SMR" id="P9WPR6"/>
<dbReference type="KEGG" id="mtc:MT0942"/>
<dbReference type="PATRIC" id="fig|83331.31.peg.1012"/>
<dbReference type="HOGENOM" id="CLU_010118_4_1_11"/>
<dbReference type="Proteomes" id="UP000001020">
    <property type="component" value="Chromosome"/>
</dbReference>
<dbReference type="GO" id="GO:0005886">
    <property type="term" value="C:plasma membrane"/>
    <property type="evidence" value="ECO:0007669"/>
    <property type="project" value="UniProtKB-SubCell"/>
</dbReference>
<dbReference type="GO" id="GO:0022857">
    <property type="term" value="F:transmembrane transporter activity"/>
    <property type="evidence" value="ECO:0007669"/>
    <property type="project" value="InterPro"/>
</dbReference>
<dbReference type="InterPro" id="IPR018093">
    <property type="entry name" value="BCCT_CS"/>
</dbReference>
<dbReference type="InterPro" id="IPR000060">
    <property type="entry name" value="BCCT_transptr"/>
</dbReference>
<dbReference type="NCBIfam" id="TIGR00842">
    <property type="entry name" value="bcct"/>
    <property type="match status" value="1"/>
</dbReference>
<dbReference type="PANTHER" id="PTHR30047:SF7">
    <property type="entry name" value="HIGH-AFFINITY CHOLINE TRANSPORT PROTEIN"/>
    <property type="match status" value="1"/>
</dbReference>
<dbReference type="PANTHER" id="PTHR30047">
    <property type="entry name" value="HIGH-AFFINITY CHOLINE TRANSPORT PROTEIN-RELATED"/>
    <property type="match status" value="1"/>
</dbReference>
<dbReference type="Pfam" id="PF02028">
    <property type="entry name" value="BCCT"/>
    <property type="match status" value="1"/>
</dbReference>
<dbReference type="PROSITE" id="PS01303">
    <property type="entry name" value="BCCT"/>
    <property type="match status" value="1"/>
</dbReference>
<sequence length="593" mass="63869">MSAKERGDQNAVVDALRSIQPAVFIPASVVIVAMIVVSVVYSSVAENAFVRLNSAITGGVGWWYILVATGFVVFALYCGISRIGTIRLGRDDELPEFSFWAWLAMLFSAGMGIGLVFYGVAEPLSHYLRPPRSRGVPALTDAAANQAMALTVFHWGLHAWAIYVVVGLGMAYMTYRRGRPLSVRWLLEPVVGRGRVEGALGHAVDVIAIVGTLFGVATSLGFGITQIASGLEYLGWIRVDNWWMVGMIAAITATATASVVSGVSKGLKWLSNINMALAAALALFVLLLGPTLFLLQSWVQNLGGYVQSLPQFMLRTAPFSHDGWLGDWTIFYWGWWISWAPFVGMFIARISRGRTIREFIGAVLLVPTVIASLWFTIFGDSALLRQRNNGDMLVNGAVDTNTSLFRLLDGLPIGAITSVLAVLVIVFFFVTSSDSGSLVIDILSAGGELDPPKLTRVYWAVLEGVAAAVLLLIGGAGSLTALRTAAIATALPFSIVMVVACYAMTKAFHFDLAATPRLLHVTVPDVVAAGNRRRHDISATLSGLIAVRDVDSGTYIVHPDTGALTVTAPPDPLDDHVFESDRHVTRRNTTSSR</sequence>
<evidence type="ECO:0000255" key="1"/>
<evidence type="ECO:0000305" key="2"/>